<feature type="chain" id="PRO_1000201696" description="Argininosuccinate lyase">
    <location>
        <begin position="1"/>
        <end position="457"/>
    </location>
</feature>
<dbReference type="EC" id="4.3.2.1" evidence="1"/>
<dbReference type="EMBL" id="CP001396">
    <property type="protein sequence ID" value="ACR62010.1"/>
    <property type="molecule type" value="Genomic_DNA"/>
</dbReference>
<dbReference type="RefSeq" id="WP_001230087.1">
    <property type="nucleotide sequence ID" value="NC_012759.1"/>
</dbReference>
<dbReference type="SMR" id="C5A0Q9"/>
<dbReference type="KEGG" id="ebw:BWG_3628"/>
<dbReference type="HOGENOM" id="CLU_027272_2_3_6"/>
<dbReference type="UniPathway" id="UPA00068">
    <property type="reaction ID" value="UER00114"/>
</dbReference>
<dbReference type="GO" id="GO:0005829">
    <property type="term" value="C:cytosol"/>
    <property type="evidence" value="ECO:0007669"/>
    <property type="project" value="TreeGrafter"/>
</dbReference>
<dbReference type="GO" id="GO:0004056">
    <property type="term" value="F:argininosuccinate lyase activity"/>
    <property type="evidence" value="ECO:0007669"/>
    <property type="project" value="UniProtKB-UniRule"/>
</dbReference>
<dbReference type="GO" id="GO:0042450">
    <property type="term" value="P:arginine biosynthetic process via ornithine"/>
    <property type="evidence" value="ECO:0007669"/>
    <property type="project" value="InterPro"/>
</dbReference>
<dbReference type="GO" id="GO:0006526">
    <property type="term" value="P:L-arginine biosynthetic process"/>
    <property type="evidence" value="ECO:0007669"/>
    <property type="project" value="UniProtKB-UniRule"/>
</dbReference>
<dbReference type="CDD" id="cd01359">
    <property type="entry name" value="Argininosuccinate_lyase"/>
    <property type="match status" value="1"/>
</dbReference>
<dbReference type="FunFam" id="1.10.275.10:FF:000004">
    <property type="entry name" value="Argininosuccinate lyase"/>
    <property type="match status" value="1"/>
</dbReference>
<dbReference type="FunFam" id="1.10.40.30:FF:000001">
    <property type="entry name" value="Argininosuccinate lyase"/>
    <property type="match status" value="1"/>
</dbReference>
<dbReference type="FunFam" id="1.20.200.10:FF:000006">
    <property type="entry name" value="Argininosuccinate lyase"/>
    <property type="match status" value="1"/>
</dbReference>
<dbReference type="Gene3D" id="1.10.40.30">
    <property type="entry name" value="Fumarase/aspartase (C-terminal domain)"/>
    <property type="match status" value="1"/>
</dbReference>
<dbReference type="Gene3D" id="1.20.200.10">
    <property type="entry name" value="Fumarase/aspartase (Central domain)"/>
    <property type="match status" value="1"/>
</dbReference>
<dbReference type="Gene3D" id="1.10.275.10">
    <property type="entry name" value="Fumarase/aspartase (N-terminal domain)"/>
    <property type="match status" value="1"/>
</dbReference>
<dbReference type="HAMAP" id="MF_00006">
    <property type="entry name" value="Arg_succ_lyase"/>
    <property type="match status" value="1"/>
</dbReference>
<dbReference type="InterPro" id="IPR029419">
    <property type="entry name" value="Arg_succ_lyase_C"/>
</dbReference>
<dbReference type="InterPro" id="IPR009049">
    <property type="entry name" value="Argininosuccinate_lyase"/>
</dbReference>
<dbReference type="InterPro" id="IPR024083">
    <property type="entry name" value="Fumarase/histidase_N"/>
</dbReference>
<dbReference type="InterPro" id="IPR020557">
    <property type="entry name" value="Fumarate_lyase_CS"/>
</dbReference>
<dbReference type="InterPro" id="IPR000362">
    <property type="entry name" value="Fumarate_lyase_fam"/>
</dbReference>
<dbReference type="InterPro" id="IPR022761">
    <property type="entry name" value="Fumarate_lyase_N"/>
</dbReference>
<dbReference type="InterPro" id="IPR008948">
    <property type="entry name" value="L-Aspartase-like"/>
</dbReference>
<dbReference type="NCBIfam" id="TIGR00838">
    <property type="entry name" value="argH"/>
    <property type="match status" value="1"/>
</dbReference>
<dbReference type="NCBIfam" id="NF008964">
    <property type="entry name" value="PRK12308.1"/>
    <property type="match status" value="1"/>
</dbReference>
<dbReference type="PANTHER" id="PTHR43814">
    <property type="entry name" value="ARGININOSUCCINATE LYASE"/>
    <property type="match status" value="1"/>
</dbReference>
<dbReference type="PANTHER" id="PTHR43814:SF1">
    <property type="entry name" value="ARGININOSUCCINATE LYASE"/>
    <property type="match status" value="1"/>
</dbReference>
<dbReference type="Pfam" id="PF14698">
    <property type="entry name" value="ASL_C2"/>
    <property type="match status" value="1"/>
</dbReference>
<dbReference type="Pfam" id="PF00206">
    <property type="entry name" value="Lyase_1"/>
    <property type="match status" value="1"/>
</dbReference>
<dbReference type="PRINTS" id="PR00145">
    <property type="entry name" value="ARGSUCLYASE"/>
</dbReference>
<dbReference type="PRINTS" id="PR00149">
    <property type="entry name" value="FUMRATELYASE"/>
</dbReference>
<dbReference type="SUPFAM" id="SSF48557">
    <property type="entry name" value="L-aspartase-like"/>
    <property type="match status" value="1"/>
</dbReference>
<dbReference type="PROSITE" id="PS00163">
    <property type="entry name" value="FUMARATE_LYASES"/>
    <property type="match status" value="1"/>
</dbReference>
<gene>
    <name evidence="1" type="primary">argH</name>
    <name type="ordered locus">BWG_3628</name>
</gene>
<sequence length="457" mass="50318">MALWGGRFTQAADQRFKQFNDSLRFDYRLAEQDIVGSVAWSKALVTVGVLTAEEQAQLEEALNVLLEDVRARPQQILESDAEDIHSWVEGKLIDKVGQLGKKLHTGRSRNDQVATDLKLWCKDTVSELLTANRQLQSALVETAQNNQDAVMPGYTHLQRAQPVTFAHWCLAYVEMLARDESRLQDALKRLDVSPLGCGALAGTAYEIDREQLAGWLGFASATRNSLDSVSDRDHVLELLSAAAIGMVHLSRFAEDLIFFNTGEAGFVELSDRVTSGSSLMPQKKNPDALELIRGKCGRVQGALTGMMMTLKGLPLAYNKDMQEDKEGLFDALDTWLDCLHMAALVLDGIQVKRPRCQEAAQQGYANATELADYLVAKGVPFREAHHIVGEAVVEAIRQGKPLEDLPLSELQKFSQVIDEDVYPILSLQSCLDKRAAKGGVSPQQVAQAIAFAQARLG</sequence>
<protein>
    <recommendedName>
        <fullName evidence="1">Argininosuccinate lyase</fullName>
        <shortName evidence="1">ASAL</shortName>
        <ecNumber evidence="1">4.3.2.1</ecNumber>
    </recommendedName>
    <alternativeName>
        <fullName evidence="1">Arginosuccinase</fullName>
    </alternativeName>
</protein>
<evidence type="ECO:0000255" key="1">
    <source>
        <dbReference type="HAMAP-Rule" id="MF_00006"/>
    </source>
</evidence>
<organism>
    <name type="scientific">Escherichia coli (strain K12 / MC4100 / BW2952)</name>
    <dbReference type="NCBI Taxonomy" id="595496"/>
    <lineage>
        <taxon>Bacteria</taxon>
        <taxon>Pseudomonadati</taxon>
        <taxon>Pseudomonadota</taxon>
        <taxon>Gammaproteobacteria</taxon>
        <taxon>Enterobacterales</taxon>
        <taxon>Enterobacteriaceae</taxon>
        <taxon>Escherichia</taxon>
    </lineage>
</organism>
<accession>C5A0Q9</accession>
<keyword id="KW-0028">Amino-acid biosynthesis</keyword>
<keyword id="KW-0055">Arginine biosynthesis</keyword>
<keyword id="KW-0963">Cytoplasm</keyword>
<keyword id="KW-0456">Lyase</keyword>
<proteinExistence type="inferred from homology"/>
<reference key="1">
    <citation type="journal article" date="2009" name="J. Bacteriol.">
        <title>Genomic sequencing reveals regulatory mutations and recombinational events in the widely used MC4100 lineage of Escherichia coli K-12.</title>
        <authorList>
            <person name="Ferenci T."/>
            <person name="Zhou Z."/>
            <person name="Betteridge T."/>
            <person name="Ren Y."/>
            <person name="Liu Y."/>
            <person name="Feng L."/>
            <person name="Reeves P.R."/>
            <person name="Wang L."/>
        </authorList>
    </citation>
    <scope>NUCLEOTIDE SEQUENCE [LARGE SCALE GENOMIC DNA]</scope>
    <source>
        <strain>K12 / MC4100 / BW2952</strain>
    </source>
</reference>
<comment type="catalytic activity">
    <reaction evidence="1">
        <text>2-(N(omega)-L-arginino)succinate = fumarate + L-arginine</text>
        <dbReference type="Rhea" id="RHEA:24020"/>
        <dbReference type="ChEBI" id="CHEBI:29806"/>
        <dbReference type="ChEBI" id="CHEBI:32682"/>
        <dbReference type="ChEBI" id="CHEBI:57472"/>
        <dbReference type="EC" id="4.3.2.1"/>
    </reaction>
</comment>
<comment type="pathway">
    <text evidence="1">Amino-acid biosynthesis; L-arginine biosynthesis; L-arginine from L-ornithine and carbamoyl phosphate: step 3/3.</text>
</comment>
<comment type="subcellular location">
    <subcellularLocation>
        <location evidence="1">Cytoplasm</location>
    </subcellularLocation>
</comment>
<comment type="similarity">
    <text evidence="1">Belongs to the lyase 1 family. Argininosuccinate lyase subfamily.</text>
</comment>
<name>ARLY_ECOBW</name>